<evidence type="ECO:0000255" key="1">
    <source>
        <dbReference type="HAMAP-Rule" id="MF_00036"/>
    </source>
</evidence>
<name>SYA_MYCTU</name>
<organism>
    <name type="scientific">Mycobacterium tuberculosis (strain ATCC 25618 / H37Rv)</name>
    <dbReference type="NCBI Taxonomy" id="83332"/>
    <lineage>
        <taxon>Bacteria</taxon>
        <taxon>Bacillati</taxon>
        <taxon>Actinomycetota</taxon>
        <taxon>Actinomycetes</taxon>
        <taxon>Mycobacteriales</taxon>
        <taxon>Mycobacteriaceae</taxon>
        <taxon>Mycobacterium</taxon>
        <taxon>Mycobacterium tuberculosis complex</taxon>
    </lineage>
</organism>
<comment type="function">
    <text evidence="1">Catalyzes the attachment of alanine to tRNA(Ala) in a two-step reaction: alanine is first activated by ATP to form Ala-AMP and then transferred to the acceptor end of tRNA(Ala). Also edits incorrectly charged Ser-tRNA(Ala) and Gly-tRNA(Ala) via its editing domain.</text>
</comment>
<comment type="catalytic activity">
    <reaction evidence="1">
        <text>tRNA(Ala) + L-alanine + ATP = L-alanyl-tRNA(Ala) + AMP + diphosphate</text>
        <dbReference type="Rhea" id="RHEA:12540"/>
        <dbReference type="Rhea" id="RHEA-COMP:9657"/>
        <dbReference type="Rhea" id="RHEA-COMP:9923"/>
        <dbReference type="ChEBI" id="CHEBI:30616"/>
        <dbReference type="ChEBI" id="CHEBI:33019"/>
        <dbReference type="ChEBI" id="CHEBI:57972"/>
        <dbReference type="ChEBI" id="CHEBI:78442"/>
        <dbReference type="ChEBI" id="CHEBI:78497"/>
        <dbReference type="ChEBI" id="CHEBI:456215"/>
        <dbReference type="EC" id="6.1.1.7"/>
    </reaction>
</comment>
<comment type="cofactor">
    <cofactor evidence="1">
        <name>Zn(2+)</name>
        <dbReference type="ChEBI" id="CHEBI:29105"/>
    </cofactor>
    <text evidence="1">Binds 1 zinc ion per subunit.</text>
</comment>
<comment type="subcellular location">
    <subcellularLocation>
        <location evidence="1">Cytoplasm</location>
    </subcellularLocation>
</comment>
<comment type="domain">
    <text evidence="1">Consists of three domains; the N-terminal catalytic domain, the editing domain and the C-terminal C-Ala domain. The editing domain removes incorrectly charged amino acids, while the C-Ala domain, along with tRNA(Ala), serves as a bridge to cooperatively bring together the editing and aminoacylation centers thus stimulating deacylation of misacylated tRNAs.</text>
</comment>
<comment type="miscellaneous">
    <text>Was identified as a high-confidence drug target.</text>
</comment>
<comment type="similarity">
    <text evidence="1">Belongs to the class-II aminoacyl-tRNA synthetase family.</text>
</comment>
<feature type="chain" id="PRO_0000075147" description="Alanine--tRNA ligase">
    <location>
        <begin position="1"/>
        <end position="904"/>
    </location>
</feature>
<feature type="binding site" evidence="1">
    <location>
        <position position="584"/>
    </location>
    <ligand>
        <name>Zn(2+)</name>
        <dbReference type="ChEBI" id="CHEBI:29105"/>
    </ligand>
</feature>
<feature type="binding site" evidence="1">
    <location>
        <position position="588"/>
    </location>
    <ligand>
        <name>Zn(2+)</name>
        <dbReference type="ChEBI" id="CHEBI:29105"/>
    </ligand>
</feature>
<feature type="binding site" evidence="1">
    <location>
        <position position="687"/>
    </location>
    <ligand>
        <name>Zn(2+)</name>
        <dbReference type="ChEBI" id="CHEBI:29105"/>
    </ligand>
</feature>
<feature type="binding site" evidence="1">
    <location>
        <position position="691"/>
    </location>
    <ligand>
        <name>Zn(2+)</name>
        <dbReference type="ChEBI" id="CHEBI:29105"/>
    </ligand>
</feature>
<accession>P9WFW7</accession>
<accession>L0TA50</accession>
<accession>O07438</accession>
<accession>P94998</accession>
<dbReference type="EC" id="6.1.1.7" evidence="1"/>
<dbReference type="EMBL" id="AL123456">
    <property type="protein sequence ID" value="CCP45351.1"/>
    <property type="molecule type" value="Genomic_DNA"/>
</dbReference>
<dbReference type="PIR" id="C70520">
    <property type="entry name" value="C70520"/>
</dbReference>
<dbReference type="RefSeq" id="NP_217071.1">
    <property type="nucleotide sequence ID" value="NC_000962.3"/>
</dbReference>
<dbReference type="RefSeq" id="WP_003902305.1">
    <property type="nucleotide sequence ID" value="NZ_NVQJ01000032.1"/>
</dbReference>
<dbReference type="SMR" id="P9WFW7"/>
<dbReference type="FunCoup" id="P9WFW7">
    <property type="interactions" value="479"/>
</dbReference>
<dbReference type="STRING" id="83332.Rv2555c"/>
<dbReference type="PaxDb" id="83332-Rv2555c"/>
<dbReference type="DNASU" id="887726"/>
<dbReference type="GeneID" id="45426558"/>
<dbReference type="GeneID" id="887726"/>
<dbReference type="KEGG" id="mtu:Rv2555c"/>
<dbReference type="KEGG" id="mtv:RVBD_2555c"/>
<dbReference type="TubercuList" id="Rv2555c"/>
<dbReference type="eggNOG" id="COG0013">
    <property type="taxonomic scope" value="Bacteria"/>
</dbReference>
<dbReference type="InParanoid" id="P9WFW7"/>
<dbReference type="OrthoDB" id="9803884at2"/>
<dbReference type="PhylomeDB" id="P9WFW7"/>
<dbReference type="Proteomes" id="UP000001584">
    <property type="component" value="Chromosome"/>
</dbReference>
<dbReference type="GO" id="GO:0005829">
    <property type="term" value="C:cytosol"/>
    <property type="evidence" value="ECO:0007005"/>
    <property type="project" value="MTBBASE"/>
</dbReference>
<dbReference type="GO" id="GO:0009274">
    <property type="term" value="C:peptidoglycan-based cell wall"/>
    <property type="evidence" value="ECO:0007005"/>
    <property type="project" value="MTBBASE"/>
</dbReference>
<dbReference type="GO" id="GO:0005886">
    <property type="term" value="C:plasma membrane"/>
    <property type="evidence" value="ECO:0007005"/>
    <property type="project" value="MTBBASE"/>
</dbReference>
<dbReference type="GO" id="GO:0004813">
    <property type="term" value="F:alanine-tRNA ligase activity"/>
    <property type="evidence" value="ECO:0000318"/>
    <property type="project" value="GO_Central"/>
</dbReference>
<dbReference type="GO" id="GO:0002161">
    <property type="term" value="F:aminoacyl-tRNA deacylase activity"/>
    <property type="evidence" value="ECO:0000318"/>
    <property type="project" value="GO_Central"/>
</dbReference>
<dbReference type="GO" id="GO:0005524">
    <property type="term" value="F:ATP binding"/>
    <property type="evidence" value="ECO:0007669"/>
    <property type="project" value="UniProtKB-UniRule"/>
</dbReference>
<dbReference type="GO" id="GO:0000049">
    <property type="term" value="F:tRNA binding"/>
    <property type="evidence" value="ECO:0007669"/>
    <property type="project" value="UniProtKB-KW"/>
</dbReference>
<dbReference type="GO" id="GO:0008270">
    <property type="term" value="F:zinc ion binding"/>
    <property type="evidence" value="ECO:0007669"/>
    <property type="project" value="UniProtKB-UniRule"/>
</dbReference>
<dbReference type="GO" id="GO:0006419">
    <property type="term" value="P:alanyl-tRNA aminoacylation"/>
    <property type="evidence" value="ECO:0000318"/>
    <property type="project" value="GO_Central"/>
</dbReference>
<dbReference type="CDD" id="cd00673">
    <property type="entry name" value="AlaRS_core"/>
    <property type="match status" value="1"/>
</dbReference>
<dbReference type="FunFam" id="2.40.30.130:FF:000011">
    <property type="entry name" value="Alanine--tRNA ligase"/>
    <property type="match status" value="1"/>
</dbReference>
<dbReference type="FunFam" id="3.10.310.40:FF:000001">
    <property type="entry name" value="Alanine--tRNA ligase"/>
    <property type="match status" value="1"/>
</dbReference>
<dbReference type="FunFam" id="3.30.54.20:FF:000001">
    <property type="entry name" value="Alanine--tRNA ligase"/>
    <property type="match status" value="1"/>
</dbReference>
<dbReference type="FunFam" id="3.30.930.10:FF:000004">
    <property type="entry name" value="Alanine--tRNA ligase"/>
    <property type="match status" value="1"/>
</dbReference>
<dbReference type="FunFam" id="3.30.980.10:FF:000004">
    <property type="entry name" value="Alanine--tRNA ligase, cytoplasmic"/>
    <property type="match status" value="1"/>
</dbReference>
<dbReference type="Gene3D" id="2.40.30.130">
    <property type="match status" value="1"/>
</dbReference>
<dbReference type="Gene3D" id="3.10.310.40">
    <property type="match status" value="1"/>
</dbReference>
<dbReference type="Gene3D" id="3.30.54.20">
    <property type="match status" value="1"/>
</dbReference>
<dbReference type="Gene3D" id="6.10.250.550">
    <property type="match status" value="1"/>
</dbReference>
<dbReference type="Gene3D" id="3.30.930.10">
    <property type="entry name" value="Bira Bifunctional Protein, Domain 2"/>
    <property type="match status" value="1"/>
</dbReference>
<dbReference type="Gene3D" id="3.30.980.10">
    <property type="entry name" value="Threonyl-trna Synthetase, Chain A, domain 2"/>
    <property type="match status" value="1"/>
</dbReference>
<dbReference type="HAMAP" id="MF_00036_B">
    <property type="entry name" value="Ala_tRNA_synth_B"/>
    <property type="match status" value="1"/>
</dbReference>
<dbReference type="InterPro" id="IPR045864">
    <property type="entry name" value="aa-tRNA-synth_II/BPL/LPL"/>
</dbReference>
<dbReference type="InterPro" id="IPR002318">
    <property type="entry name" value="Ala-tRNA-lgiase_IIc"/>
</dbReference>
<dbReference type="InterPro" id="IPR018162">
    <property type="entry name" value="Ala-tRNA-ligase_IIc_anticod-bd"/>
</dbReference>
<dbReference type="InterPro" id="IPR018165">
    <property type="entry name" value="Ala-tRNA-synth_IIc_core"/>
</dbReference>
<dbReference type="InterPro" id="IPR018164">
    <property type="entry name" value="Ala-tRNA-synth_IIc_N"/>
</dbReference>
<dbReference type="InterPro" id="IPR050058">
    <property type="entry name" value="Ala-tRNA_ligase"/>
</dbReference>
<dbReference type="InterPro" id="IPR023033">
    <property type="entry name" value="Ala_tRNA_ligase_euk/bac"/>
</dbReference>
<dbReference type="InterPro" id="IPR003156">
    <property type="entry name" value="DHHA1_dom"/>
</dbReference>
<dbReference type="InterPro" id="IPR018163">
    <property type="entry name" value="Thr/Ala-tRNA-synth_IIc_edit"/>
</dbReference>
<dbReference type="InterPro" id="IPR009000">
    <property type="entry name" value="Transl_B-barrel_sf"/>
</dbReference>
<dbReference type="InterPro" id="IPR012947">
    <property type="entry name" value="tRNA_SAD"/>
</dbReference>
<dbReference type="NCBIfam" id="TIGR00344">
    <property type="entry name" value="alaS"/>
    <property type="match status" value="1"/>
</dbReference>
<dbReference type="PANTHER" id="PTHR11777:SF9">
    <property type="entry name" value="ALANINE--TRNA LIGASE, CYTOPLASMIC"/>
    <property type="match status" value="1"/>
</dbReference>
<dbReference type="PANTHER" id="PTHR11777">
    <property type="entry name" value="ALANYL-TRNA SYNTHETASE"/>
    <property type="match status" value="1"/>
</dbReference>
<dbReference type="Pfam" id="PF02272">
    <property type="entry name" value="DHHA1"/>
    <property type="match status" value="1"/>
</dbReference>
<dbReference type="Pfam" id="PF01411">
    <property type="entry name" value="tRNA-synt_2c"/>
    <property type="match status" value="1"/>
</dbReference>
<dbReference type="Pfam" id="PF07973">
    <property type="entry name" value="tRNA_SAD"/>
    <property type="match status" value="1"/>
</dbReference>
<dbReference type="PRINTS" id="PR00980">
    <property type="entry name" value="TRNASYNTHALA"/>
</dbReference>
<dbReference type="SMART" id="SM00863">
    <property type="entry name" value="tRNA_SAD"/>
    <property type="match status" value="1"/>
</dbReference>
<dbReference type="SUPFAM" id="SSF55681">
    <property type="entry name" value="Class II aaRS and biotin synthetases"/>
    <property type="match status" value="1"/>
</dbReference>
<dbReference type="SUPFAM" id="SSF101353">
    <property type="entry name" value="Putative anticodon-binding domain of alanyl-tRNA synthetase (AlaRS)"/>
    <property type="match status" value="1"/>
</dbReference>
<dbReference type="SUPFAM" id="SSF55186">
    <property type="entry name" value="ThrRS/AlaRS common domain"/>
    <property type="match status" value="1"/>
</dbReference>
<dbReference type="SUPFAM" id="SSF50447">
    <property type="entry name" value="Translation proteins"/>
    <property type="match status" value="1"/>
</dbReference>
<dbReference type="PROSITE" id="PS50860">
    <property type="entry name" value="AA_TRNA_LIGASE_II_ALA"/>
    <property type="match status" value="1"/>
</dbReference>
<proteinExistence type="evidence at protein level"/>
<reference key="1">
    <citation type="journal article" date="1998" name="Nature">
        <title>Deciphering the biology of Mycobacterium tuberculosis from the complete genome sequence.</title>
        <authorList>
            <person name="Cole S.T."/>
            <person name="Brosch R."/>
            <person name="Parkhill J."/>
            <person name="Garnier T."/>
            <person name="Churcher C.M."/>
            <person name="Harris D.E."/>
            <person name="Gordon S.V."/>
            <person name="Eiglmeier K."/>
            <person name="Gas S."/>
            <person name="Barry C.E. III"/>
            <person name="Tekaia F."/>
            <person name="Badcock K."/>
            <person name="Basham D."/>
            <person name="Brown D."/>
            <person name="Chillingworth T."/>
            <person name="Connor R."/>
            <person name="Davies R.M."/>
            <person name="Devlin K."/>
            <person name="Feltwell T."/>
            <person name="Gentles S."/>
            <person name="Hamlin N."/>
            <person name="Holroyd S."/>
            <person name="Hornsby T."/>
            <person name="Jagels K."/>
            <person name="Krogh A."/>
            <person name="McLean J."/>
            <person name="Moule S."/>
            <person name="Murphy L.D."/>
            <person name="Oliver S."/>
            <person name="Osborne J."/>
            <person name="Quail M.A."/>
            <person name="Rajandream M.A."/>
            <person name="Rogers J."/>
            <person name="Rutter S."/>
            <person name="Seeger K."/>
            <person name="Skelton S."/>
            <person name="Squares S."/>
            <person name="Squares R."/>
            <person name="Sulston J.E."/>
            <person name="Taylor K."/>
            <person name="Whitehead S."/>
            <person name="Barrell B.G."/>
        </authorList>
    </citation>
    <scope>NUCLEOTIDE SEQUENCE [LARGE SCALE GENOMIC DNA]</scope>
    <source>
        <strain>ATCC 25618 / H37Rv</strain>
    </source>
</reference>
<reference key="2">
    <citation type="journal article" date="2008" name="BMC Syst. Biol.">
        <title>targetTB: a target identification pipeline for Mycobacterium tuberculosis through an interactome, reactome and genome-scale structural analysis.</title>
        <authorList>
            <person name="Raman K."/>
            <person name="Yeturu K."/>
            <person name="Chandra N."/>
        </authorList>
    </citation>
    <scope>IDENTIFICATION AS A DRUG TARGET [LARGE SCALE ANALYSIS]</scope>
</reference>
<reference key="3">
    <citation type="journal article" date="2011" name="Mol. Cell. Proteomics">
        <title>Proteogenomic analysis of Mycobacterium tuberculosis by high resolution mass spectrometry.</title>
        <authorList>
            <person name="Kelkar D.S."/>
            <person name="Kumar D."/>
            <person name="Kumar P."/>
            <person name="Balakrishnan L."/>
            <person name="Muthusamy B."/>
            <person name="Yadav A.K."/>
            <person name="Shrivastava P."/>
            <person name="Marimuthu A."/>
            <person name="Anand S."/>
            <person name="Sundaram H."/>
            <person name="Kingsbury R."/>
            <person name="Harsha H.C."/>
            <person name="Nair B."/>
            <person name="Prasad T.S."/>
            <person name="Chauhan D.S."/>
            <person name="Katoch K."/>
            <person name="Katoch V.M."/>
            <person name="Kumar P."/>
            <person name="Chaerkady R."/>
            <person name="Ramachandran S."/>
            <person name="Dash D."/>
            <person name="Pandey A."/>
        </authorList>
    </citation>
    <scope>IDENTIFICATION BY MASS SPECTROMETRY [LARGE SCALE ANALYSIS]</scope>
    <source>
        <strain>ATCC 25618 / H37Rv</strain>
    </source>
</reference>
<sequence>MQTHEIRKRFLDHFVKAGHTEVPSASVILDDPNLLFVNAGMVQFVPFFLGQRTPPYPTATSIQKCIRTPDIDEVGITTRHNTFFQMAGNFSFGDYFKRGAIELAWALLTNSLAAGGYGLDPERIWTTVYFDDDEAVRLWQEVAGLPAERIQRRGMADNYWSMGIPGPCGPSSEIYYDRGPEFGPAGGPIVSEDRYLEVWNLVFMQNERGEGTTKEDYQILGPLPRKNIDTGMGVERIALVLQDVHNVYETDLLRPVIDTVARVAARAYDVGNHEDDVRYRIIADHSRTAAILIGDGVSPGNDGRGYVLRRLLRRVIRSAKLLGIDAAIVGDLMATVRNAMGPSYPELVADFERISRIAVAEETAFNRTLASGSRLFEEVASSTKKSGATVLSGSDAFTLHDTYGFPIELTLEMAAETGLQVDEIGFRELMAEQRRRAKADAAARKHAHADLSAYRELVDAGATEFTGFDELRSQARILGIFVDGKRVPVVAHGVAGGAGEGQRVELVLDRTPLYAESGGQIADEGTISGTGSSEAARAAVTDVQKIAKTLWVHRVNVESGEFVEGDTVIAAVDPGWRRGATQGHSGTHMVHAALRQVLGPNAVQAGSLNRPGYLRFDFNWQGPLTDDQRTQVEEVTNEAVQADFEVRTFTEQLDKAKAMGAIALFGESYPDEVRVVEMGGPFSLELCGGTHVSNTAQIGPVTILGESSIGSGVRRVEAYVGLDSFRHLAKERALMAGLASSLKVPSEEVPARVANLVERLRAAEKELERVRMASARAAATNAAAGAQRIGNVRLVAQRMSGGMTAADLRSLIGDIRGKLGSEPAVVALIAEGESQTVPYAVAANPAAQDLGIRANDLVKQLAVAVEGRGGGKADLAQGSGKNPTGIDAALDAVRSEIAVIARVG</sequence>
<gene>
    <name evidence="1" type="primary">alaS</name>
    <name type="ordered locus">Rv2555c</name>
    <name type="ORF">MTCY159.01</name>
    <name type="ORF">MTCYW318.01c</name>
</gene>
<keyword id="KW-0030">Aminoacyl-tRNA synthetase</keyword>
<keyword id="KW-0067">ATP-binding</keyword>
<keyword id="KW-0963">Cytoplasm</keyword>
<keyword id="KW-0436">Ligase</keyword>
<keyword id="KW-0479">Metal-binding</keyword>
<keyword id="KW-0547">Nucleotide-binding</keyword>
<keyword id="KW-0648">Protein biosynthesis</keyword>
<keyword id="KW-1185">Reference proteome</keyword>
<keyword id="KW-0694">RNA-binding</keyword>
<keyword id="KW-0820">tRNA-binding</keyword>
<keyword id="KW-0862">Zinc</keyword>
<protein>
    <recommendedName>
        <fullName evidence="1">Alanine--tRNA ligase</fullName>
        <ecNumber evidence="1">6.1.1.7</ecNumber>
    </recommendedName>
    <alternativeName>
        <fullName evidence="1">Alanyl-tRNA synthetase</fullName>
        <shortName evidence="1">AlaRS</shortName>
    </alternativeName>
</protein>